<proteinExistence type="inferred from homology"/>
<name>RL35_WIGBR</name>
<organism>
    <name type="scientific">Wigglesworthia glossinidia brevipalpis</name>
    <dbReference type="NCBI Taxonomy" id="36870"/>
    <lineage>
        <taxon>Bacteria</taxon>
        <taxon>Pseudomonadati</taxon>
        <taxon>Pseudomonadota</taxon>
        <taxon>Gammaproteobacteria</taxon>
        <taxon>Enterobacterales</taxon>
        <taxon>Erwiniaceae</taxon>
        <taxon>Wigglesworthia</taxon>
    </lineage>
</organism>
<gene>
    <name evidence="1" type="primary">rpmI</name>
    <name type="ordered locus">WIGBR0830</name>
</gene>
<feature type="chain" id="PRO_0000177456" description="Large ribosomal subunit protein bL35">
    <location>
        <begin position="1"/>
        <end position="66"/>
    </location>
</feature>
<sequence>MLKIKNIRSVCKRFKKTASCNKFKYKKSNLRHILTKKSTKRKRKLRIKSFATKGDKKLILRCLPYK</sequence>
<reference key="1">
    <citation type="journal article" date="2002" name="Nat. Genet.">
        <title>Genome sequence of the endocellular obligate symbiont of tsetse flies, Wigglesworthia glossinidia.</title>
        <authorList>
            <person name="Akman L."/>
            <person name="Yamashita A."/>
            <person name="Watanabe H."/>
            <person name="Oshima K."/>
            <person name="Shiba T."/>
            <person name="Hattori M."/>
            <person name="Aksoy S."/>
        </authorList>
    </citation>
    <scope>NUCLEOTIDE SEQUENCE [LARGE SCALE GENOMIC DNA]</scope>
</reference>
<accession>Q8D3B8</accession>
<evidence type="ECO:0000255" key="1">
    <source>
        <dbReference type="HAMAP-Rule" id="MF_00514"/>
    </source>
</evidence>
<evidence type="ECO:0000305" key="2"/>
<protein>
    <recommendedName>
        <fullName evidence="1">Large ribosomal subunit protein bL35</fullName>
    </recommendedName>
    <alternativeName>
        <fullName evidence="2">50S ribosomal protein L35</fullName>
    </alternativeName>
</protein>
<dbReference type="EMBL" id="BA000021">
    <property type="protein sequence ID" value="BAC24229.1"/>
    <property type="molecule type" value="Genomic_DNA"/>
</dbReference>
<dbReference type="SMR" id="Q8D3B8"/>
<dbReference type="STRING" id="36870.gene:10368561"/>
<dbReference type="KEGG" id="wbr:rpmI"/>
<dbReference type="eggNOG" id="COG0291">
    <property type="taxonomic scope" value="Bacteria"/>
</dbReference>
<dbReference type="HOGENOM" id="CLU_169643_1_1_6"/>
<dbReference type="OrthoDB" id="47476at2"/>
<dbReference type="Proteomes" id="UP000000562">
    <property type="component" value="Chromosome"/>
</dbReference>
<dbReference type="GO" id="GO:1990904">
    <property type="term" value="C:ribonucleoprotein complex"/>
    <property type="evidence" value="ECO:0007669"/>
    <property type="project" value="UniProtKB-KW"/>
</dbReference>
<dbReference type="GO" id="GO:0005840">
    <property type="term" value="C:ribosome"/>
    <property type="evidence" value="ECO:0007669"/>
    <property type="project" value="UniProtKB-KW"/>
</dbReference>
<dbReference type="GO" id="GO:0003735">
    <property type="term" value="F:structural constituent of ribosome"/>
    <property type="evidence" value="ECO:0007669"/>
    <property type="project" value="InterPro"/>
</dbReference>
<dbReference type="GO" id="GO:0006412">
    <property type="term" value="P:translation"/>
    <property type="evidence" value="ECO:0007669"/>
    <property type="project" value="UniProtKB-UniRule"/>
</dbReference>
<dbReference type="FunFam" id="4.10.410.60:FF:000001">
    <property type="entry name" value="50S ribosomal protein L35"/>
    <property type="match status" value="1"/>
</dbReference>
<dbReference type="Gene3D" id="4.10.410.60">
    <property type="match status" value="1"/>
</dbReference>
<dbReference type="HAMAP" id="MF_00514">
    <property type="entry name" value="Ribosomal_bL35"/>
    <property type="match status" value="1"/>
</dbReference>
<dbReference type="InterPro" id="IPR001706">
    <property type="entry name" value="Ribosomal_bL35"/>
</dbReference>
<dbReference type="InterPro" id="IPR021137">
    <property type="entry name" value="Ribosomal_bL35-like"/>
</dbReference>
<dbReference type="InterPro" id="IPR018265">
    <property type="entry name" value="Ribosomal_bL35_CS"/>
</dbReference>
<dbReference type="InterPro" id="IPR037229">
    <property type="entry name" value="Ribosomal_bL35_sf"/>
</dbReference>
<dbReference type="NCBIfam" id="TIGR00001">
    <property type="entry name" value="rpmI_bact"/>
    <property type="match status" value="1"/>
</dbReference>
<dbReference type="Pfam" id="PF01632">
    <property type="entry name" value="Ribosomal_L35p"/>
    <property type="match status" value="1"/>
</dbReference>
<dbReference type="PRINTS" id="PR00064">
    <property type="entry name" value="RIBOSOMALL35"/>
</dbReference>
<dbReference type="SUPFAM" id="SSF143034">
    <property type="entry name" value="L35p-like"/>
    <property type="match status" value="1"/>
</dbReference>
<dbReference type="PROSITE" id="PS00936">
    <property type="entry name" value="RIBOSOMAL_L35"/>
    <property type="match status" value="1"/>
</dbReference>
<keyword id="KW-1185">Reference proteome</keyword>
<keyword id="KW-0687">Ribonucleoprotein</keyword>
<keyword id="KW-0689">Ribosomal protein</keyword>
<comment type="similarity">
    <text evidence="1">Belongs to the bacterial ribosomal protein bL35 family.</text>
</comment>